<evidence type="ECO:0000255" key="1">
    <source>
        <dbReference type="HAMAP-Rule" id="MF_03100"/>
    </source>
</evidence>
<reference key="1">
    <citation type="journal article" date="2007" name="Proc. Natl. Acad. Sci. U.S.A.">
        <title>Genome sequencing and comparative analysis of Saccharomyces cerevisiae strain YJM789.</title>
        <authorList>
            <person name="Wei W."/>
            <person name="McCusker J.H."/>
            <person name="Hyman R.W."/>
            <person name="Jones T."/>
            <person name="Ning Y."/>
            <person name="Cao Z."/>
            <person name="Gu Z."/>
            <person name="Bruno D."/>
            <person name="Miranda M."/>
            <person name="Nguyen M."/>
            <person name="Wilhelmy J."/>
            <person name="Komp C."/>
            <person name="Tamse R."/>
            <person name="Wang X."/>
            <person name="Jia P."/>
            <person name="Luedi P."/>
            <person name="Oefner P.J."/>
            <person name="David L."/>
            <person name="Dietrich F.S."/>
            <person name="Li Y."/>
            <person name="Davis R.W."/>
            <person name="Steinmetz L.M."/>
        </authorList>
    </citation>
    <scope>NUCLEOTIDE SEQUENCE [LARGE SCALE GENOMIC DNA]</scope>
    <source>
        <strain>YJM789</strain>
    </source>
</reference>
<gene>
    <name evidence="1" type="primary">SLX1</name>
    <name type="ORF">SCY_0436</name>
</gene>
<feature type="chain" id="PRO_0000383806" description="Structure-specific endonuclease subunit SLX1">
    <location>
        <begin position="1"/>
        <end position="304"/>
    </location>
</feature>
<feature type="domain" description="GIY-YIG" evidence="1">
    <location>
        <begin position="12"/>
        <end position="95"/>
    </location>
</feature>
<feature type="zinc finger region" description="SLX1-type" evidence="1">
    <location>
        <begin position="218"/>
        <end position="282"/>
    </location>
</feature>
<proteinExistence type="inferred from homology"/>
<organism>
    <name type="scientific">Saccharomyces cerevisiae (strain YJM789)</name>
    <name type="common">Baker's yeast</name>
    <dbReference type="NCBI Taxonomy" id="307796"/>
    <lineage>
        <taxon>Eukaryota</taxon>
        <taxon>Fungi</taxon>
        <taxon>Dikarya</taxon>
        <taxon>Ascomycota</taxon>
        <taxon>Saccharomycotina</taxon>
        <taxon>Saccharomycetes</taxon>
        <taxon>Saccharomycetales</taxon>
        <taxon>Saccharomycetaceae</taxon>
        <taxon>Saccharomyces</taxon>
    </lineage>
</organism>
<name>SLX1_YEAS7</name>
<accession>A6ZLG6</accession>
<dbReference type="EC" id="3.1.-.-" evidence="1"/>
<dbReference type="EMBL" id="AAFW02000011">
    <property type="protein sequence ID" value="EDN64835.1"/>
    <property type="molecule type" value="Genomic_DNA"/>
</dbReference>
<dbReference type="SMR" id="A6ZLG6"/>
<dbReference type="HOGENOM" id="CLU_030739_1_1_1"/>
<dbReference type="Proteomes" id="UP000007060">
    <property type="component" value="Unassembled WGS sequence"/>
</dbReference>
<dbReference type="GO" id="GO:0033557">
    <property type="term" value="C:Slx1-Slx4 complex"/>
    <property type="evidence" value="ECO:0007669"/>
    <property type="project" value="UniProtKB-UniRule"/>
</dbReference>
<dbReference type="GO" id="GO:0017108">
    <property type="term" value="F:5'-flap endonuclease activity"/>
    <property type="evidence" value="ECO:0007669"/>
    <property type="project" value="UniProtKB-UniRule"/>
</dbReference>
<dbReference type="GO" id="GO:0008821">
    <property type="term" value="F:crossover junction DNA endonuclease activity"/>
    <property type="evidence" value="ECO:0007669"/>
    <property type="project" value="TreeGrafter"/>
</dbReference>
<dbReference type="GO" id="GO:0008270">
    <property type="term" value="F:zinc ion binding"/>
    <property type="evidence" value="ECO:0007669"/>
    <property type="project" value="UniProtKB-KW"/>
</dbReference>
<dbReference type="GO" id="GO:0000724">
    <property type="term" value="P:double-strand break repair via homologous recombination"/>
    <property type="evidence" value="ECO:0007669"/>
    <property type="project" value="TreeGrafter"/>
</dbReference>
<dbReference type="CDD" id="cd10455">
    <property type="entry name" value="GIY-YIG_SLX1"/>
    <property type="match status" value="1"/>
</dbReference>
<dbReference type="FunFam" id="3.40.1440.10:FF:000006">
    <property type="entry name" value="Structure-specific endonuclease subunit SLX1"/>
    <property type="match status" value="1"/>
</dbReference>
<dbReference type="Gene3D" id="3.40.1440.10">
    <property type="entry name" value="GIY-YIG endonuclease"/>
    <property type="match status" value="1"/>
</dbReference>
<dbReference type="Gene3D" id="3.30.40.10">
    <property type="entry name" value="Zinc/RING finger domain, C3HC4 (zinc finger)"/>
    <property type="match status" value="1"/>
</dbReference>
<dbReference type="HAMAP" id="MF_03100">
    <property type="entry name" value="Endonuc_su_Slx1"/>
    <property type="match status" value="1"/>
</dbReference>
<dbReference type="InterPro" id="IPR000305">
    <property type="entry name" value="GIY-YIG_endonuc"/>
</dbReference>
<dbReference type="InterPro" id="IPR035901">
    <property type="entry name" value="GIY-YIG_endonuc_sf"/>
</dbReference>
<dbReference type="InterPro" id="IPR027520">
    <property type="entry name" value="Slx1"/>
</dbReference>
<dbReference type="InterPro" id="IPR048749">
    <property type="entry name" value="SLX1_C"/>
</dbReference>
<dbReference type="InterPro" id="IPR050381">
    <property type="entry name" value="SLX1_endonuclease"/>
</dbReference>
<dbReference type="InterPro" id="IPR013083">
    <property type="entry name" value="Znf_RING/FYVE/PHD"/>
</dbReference>
<dbReference type="PANTHER" id="PTHR20208">
    <property type="entry name" value="STRUCTURE-SPECIFIC ENDONUCLEASE SUBUNIT SLX1"/>
    <property type="match status" value="1"/>
</dbReference>
<dbReference type="PANTHER" id="PTHR20208:SF10">
    <property type="entry name" value="STRUCTURE-SPECIFIC ENDONUCLEASE SUBUNIT SLX1"/>
    <property type="match status" value="1"/>
</dbReference>
<dbReference type="Pfam" id="PF01541">
    <property type="entry name" value="GIY-YIG"/>
    <property type="match status" value="1"/>
</dbReference>
<dbReference type="Pfam" id="PF21202">
    <property type="entry name" value="SLX1_C"/>
    <property type="match status" value="1"/>
</dbReference>
<dbReference type="SMART" id="SM00465">
    <property type="entry name" value="GIYc"/>
    <property type="match status" value="1"/>
</dbReference>
<dbReference type="SUPFAM" id="SSF82771">
    <property type="entry name" value="GIY-YIG endonuclease"/>
    <property type="match status" value="1"/>
</dbReference>
<dbReference type="PROSITE" id="PS50164">
    <property type="entry name" value="GIY_YIG"/>
    <property type="match status" value="1"/>
</dbReference>
<protein>
    <recommendedName>
        <fullName evidence="1">Structure-specific endonuclease subunit SLX1</fullName>
        <ecNumber evidence="1">3.1.-.-</ecNumber>
    </recommendedName>
</protein>
<keyword id="KW-0227">DNA damage</keyword>
<keyword id="KW-0233">DNA recombination</keyword>
<keyword id="KW-0234">DNA repair</keyword>
<keyword id="KW-0255">Endonuclease</keyword>
<keyword id="KW-0378">Hydrolase</keyword>
<keyword id="KW-0479">Metal-binding</keyword>
<keyword id="KW-0540">Nuclease</keyword>
<keyword id="KW-0539">Nucleus</keyword>
<keyword id="KW-0862">Zinc</keyword>
<keyword id="KW-0863">Zinc-finger</keyword>
<sequence length="304" mass="35839">MSQKIQQHQFPDFYCCYLLQSINKRQSFYVGSTPNPVRRLRQHNGKLAVGGAYRTKRDGSRPWEMIMIVRGFPSKIAALQFEHAWQHGYQTHYIAEKDRVVKHKAGGRTLHHKVALMKLLLKHEFFQRMNLIVEVFNIKAWEVWKQDKFFIERDRFPINIQINENALEEPKEKTVDVLMDHSDENLKVVEAVYTKVIENERNIFETFEKKLTTGVVRCEICEKEIDYTSEEQNLKPFVALCNNKDCGCVNHLKCLHRYFLDDEQLIVGRRNLIPRGGKCPKCDMFCDWTTLVKFSTRMKLAHGK</sequence>
<comment type="function">
    <text evidence="1">Catalytic subunit of the SLX1-SLX4 structure-specific endonuclease that resolves DNA secondary structures generated during DNA repair and recombination. Has endonuclease activity towards branched DNA substrates, introducing single-strand cuts in duplex DNA close to junctions with ss-DNA. Has a preference for simple Y, 5'-flap and replication fork-like structures. It cleaves the strand bearing the 5'-non-homologous arm at the branch site junction and generates ligatable, nicked products from the 5'-flap or replication fork substrates. Plays a critical role in maintaining the integrity of the ribosomal DNA (rDNA) loci, where it has a role in re-starting stalled replication forks. Has Holliday junction resolvase activity in vitro.</text>
</comment>
<comment type="cofactor">
    <cofactor evidence="1">
        <name>a divalent metal cation</name>
        <dbReference type="ChEBI" id="CHEBI:60240"/>
    </cofactor>
</comment>
<comment type="subunit">
    <text evidence="1">Forms a heterodimer with SLX4.</text>
</comment>
<comment type="subcellular location">
    <subcellularLocation>
        <location evidence="1">Nucleus</location>
    </subcellularLocation>
</comment>
<comment type="similarity">
    <text evidence="1">Belongs to the SLX1 family.</text>
</comment>